<keyword id="KW-0963">Cytoplasm</keyword>
<keyword id="KW-0324">Glycolysis</keyword>
<keyword id="KW-0520">NAD</keyword>
<keyword id="KW-0560">Oxidoreductase</keyword>
<feature type="chain" id="PRO_0000145604" description="Glyceraldehyde-3-phosphate dehydrogenase, cytosolic">
    <location>
        <begin position="1"/>
        <end position="341"/>
    </location>
</feature>
<feature type="active site" description="Nucleophile" evidence="2">
    <location>
        <position position="156"/>
    </location>
</feature>
<feature type="binding site" evidence="1">
    <location>
        <begin position="15"/>
        <end position="16"/>
    </location>
    <ligand>
        <name>NAD(+)</name>
        <dbReference type="ChEBI" id="CHEBI:57540"/>
    </ligand>
</feature>
<feature type="binding site" evidence="1">
    <location>
        <position position="37"/>
    </location>
    <ligand>
        <name>NAD(+)</name>
        <dbReference type="ChEBI" id="CHEBI:57540"/>
    </ligand>
</feature>
<feature type="binding site" evidence="1">
    <location>
        <position position="84"/>
    </location>
    <ligand>
        <name>NAD(+)</name>
        <dbReference type="ChEBI" id="CHEBI:57540"/>
    </ligand>
</feature>
<feature type="binding site" evidence="1">
    <location>
        <begin position="155"/>
        <end position="157"/>
    </location>
    <ligand>
        <name>D-glyceraldehyde 3-phosphate</name>
        <dbReference type="ChEBI" id="CHEBI:59776"/>
    </ligand>
</feature>
<feature type="binding site" evidence="1">
    <location>
        <position position="186"/>
    </location>
    <ligand>
        <name>D-glyceraldehyde 3-phosphate</name>
        <dbReference type="ChEBI" id="CHEBI:59776"/>
    </ligand>
</feature>
<feature type="binding site" evidence="1">
    <location>
        <begin position="215"/>
        <end position="216"/>
    </location>
    <ligand>
        <name>D-glyceraldehyde 3-phosphate</name>
        <dbReference type="ChEBI" id="CHEBI:59776"/>
    </ligand>
</feature>
<feature type="binding site" evidence="1">
    <location>
        <position position="238"/>
    </location>
    <ligand>
        <name>D-glyceraldehyde 3-phosphate</name>
        <dbReference type="ChEBI" id="CHEBI:59776"/>
    </ligand>
</feature>
<feature type="binding site" evidence="1">
    <location>
        <position position="320"/>
    </location>
    <ligand>
        <name>NAD(+)</name>
        <dbReference type="ChEBI" id="CHEBI:57540"/>
    </ligand>
</feature>
<feature type="site" description="Activates thiol group during catalysis" evidence="1">
    <location>
        <position position="183"/>
    </location>
</feature>
<sequence>MGGKKIKIGINGFGRIGRLVARVALQRDDVELVAVNDPFITTDYMTYMFKYDSVHGQWKHHELKVKDSKTLLFGEKPVTVFGVRNPEEIPWGETGAEFVVESTGVFTDKDKAAAHLKGGAKKVIISAPSKDAPMFVVGVNEHEYKSNIDIVSNASCTTNCLAPLAKVINDKFGIVEGLMTTVHSITATQKTVDGPSSKDWRGGRAAGFNIIPSSTGAAKAVGKVLPALNGKLTGMAFRVPTVDVSVVDLTVRLEKAASYEEIKAVIKAESEGKLKGILGYTEEDVVSTDFIGDNRSSIFDAKAGIALNEHFVKLVSWYDNEWGYSSRVIDLILIVHMASCQ</sequence>
<organism>
    <name type="scientific">Magnolia liliiflora</name>
    <name type="common">Mulan magnolia</name>
    <name type="synonym">Yulania liliiflora</name>
    <dbReference type="NCBI Taxonomy" id="3403"/>
    <lineage>
        <taxon>Eukaryota</taxon>
        <taxon>Viridiplantae</taxon>
        <taxon>Streptophyta</taxon>
        <taxon>Embryophyta</taxon>
        <taxon>Tracheophyta</taxon>
        <taxon>Spermatophyta</taxon>
        <taxon>Magnoliopsida</taxon>
        <taxon>Magnoliidae</taxon>
        <taxon>Magnoliales</taxon>
        <taxon>Magnoliaceae</taxon>
        <taxon>Magnolia</taxon>
    </lineage>
</organism>
<dbReference type="EC" id="1.2.1.12"/>
<dbReference type="EMBL" id="X60347">
    <property type="protein sequence ID" value="CAA42905.1"/>
    <property type="molecule type" value="mRNA"/>
</dbReference>
<dbReference type="PIR" id="S18483">
    <property type="entry name" value="DEJMG"/>
</dbReference>
<dbReference type="SMR" id="P26518"/>
<dbReference type="UniPathway" id="UPA00109">
    <property type="reaction ID" value="UER00184"/>
</dbReference>
<dbReference type="GO" id="GO:0005829">
    <property type="term" value="C:cytosol"/>
    <property type="evidence" value="ECO:0007669"/>
    <property type="project" value="TreeGrafter"/>
</dbReference>
<dbReference type="GO" id="GO:0004365">
    <property type="term" value="F:glyceraldehyde-3-phosphate dehydrogenase (NAD+) (phosphorylating) activity"/>
    <property type="evidence" value="ECO:0007669"/>
    <property type="project" value="UniProtKB-EC"/>
</dbReference>
<dbReference type="GO" id="GO:0051287">
    <property type="term" value="F:NAD binding"/>
    <property type="evidence" value="ECO:0007669"/>
    <property type="project" value="InterPro"/>
</dbReference>
<dbReference type="GO" id="GO:0050661">
    <property type="term" value="F:NADP binding"/>
    <property type="evidence" value="ECO:0007669"/>
    <property type="project" value="InterPro"/>
</dbReference>
<dbReference type="GO" id="GO:0006006">
    <property type="term" value="P:glucose metabolic process"/>
    <property type="evidence" value="ECO:0007669"/>
    <property type="project" value="InterPro"/>
</dbReference>
<dbReference type="GO" id="GO:0006096">
    <property type="term" value="P:glycolytic process"/>
    <property type="evidence" value="ECO:0007669"/>
    <property type="project" value="UniProtKB-UniPathway"/>
</dbReference>
<dbReference type="CDD" id="cd18126">
    <property type="entry name" value="GAPDH_I_C"/>
    <property type="match status" value="1"/>
</dbReference>
<dbReference type="CDD" id="cd05214">
    <property type="entry name" value="GAPDH_I_N"/>
    <property type="match status" value="1"/>
</dbReference>
<dbReference type="FunFam" id="3.30.360.10:FF:000001">
    <property type="entry name" value="Glyceraldehyde-3-phosphate dehydrogenase"/>
    <property type="match status" value="1"/>
</dbReference>
<dbReference type="FunFam" id="3.40.50.720:FF:000020">
    <property type="entry name" value="Glyceraldehyde-3-phosphate dehydrogenase"/>
    <property type="match status" value="1"/>
</dbReference>
<dbReference type="Gene3D" id="3.30.360.10">
    <property type="entry name" value="Dihydrodipicolinate Reductase, domain 2"/>
    <property type="match status" value="1"/>
</dbReference>
<dbReference type="Gene3D" id="3.40.50.720">
    <property type="entry name" value="NAD(P)-binding Rossmann-like Domain"/>
    <property type="match status" value="1"/>
</dbReference>
<dbReference type="InterPro" id="IPR020831">
    <property type="entry name" value="GlycerAld/Erythrose_P_DH"/>
</dbReference>
<dbReference type="InterPro" id="IPR020830">
    <property type="entry name" value="GlycerAld_3-P_DH_AS"/>
</dbReference>
<dbReference type="InterPro" id="IPR020829">
    <property type="entry name" value="GlycerAld_3-P_DH_cat"/>
</dbReference>
<dbReference type="InterPro" id="IPR020828">
    <property type="entry name" value="GlycerAld_3-P_DH_NAD(P)-bd"/>
</dbReference>
<dbReference type="InterPro" id="IPR006424">
    <property type="entry name" value="Glyceraldehyde-3-P_DH_1"/>
</dbReference>
<dbReference type="InterPro" id="IPR036291">
    <property type="entry name" value="NAD(P)-bd_dom_sf"/>
</dbReference>
<dbReference type="NCBIfam" id="TIGR01534">
    <property type="entry name" value="GAPDH-I"/>
    <property type="match status" value="1"/>
</dbReference>
<dbReference type="PANTHER" id="PTHR10836">
    <property type="entry name" value="GLYCERALDEHYDE 3-PHOSPHATE DEHYDROGENASE"/>
    <property type="match status" value="1"/>
</dbReference>
<dbReference type="PANTHER" id="PTHR10836:SF112">
    <property type="entry name" value="GLYCERALDEHYDE-3-PHOSPHATE DEHYDROGENASE GAPC1, CYTOSOLIC-RELATED"/>
    <property type="match status" value="1"/>
</dbReference>
<dbReference type="Pfam" id="PF02800">
    <property type="entry name" value="Gp_dh_C"/>
    <property type="match status" value="1"/>
</dbReference>
<dbReference type="Pfam" id="PF00044">
    <property type="entry name" value="Gp_dh_N"/>
    <property type="match status" value="1"/>
</dbReference>
<dbReference type="PIRSF" id="PIRSF000149">
    <property type="entry name" value="GAP_DH"/>
    <property type="match status" value="1"/>
</dbReference>
<dbReference type="PRINTS" id="PR00078">
    <property type="entry name" value="G3PDHDRGNASE"/>
</dbReference>
<dbReference type="SMART" id="SM00846">
    <property type="entry name" value="Gp_dh_N"/>
    <property type="match status" value="1"/>
</dbReference>
<dbReference type="SUPFAM" id="SSF55347">
    <property type="entry name" value="Glyceraldehyde-3-phosphate dehydrogenase-like, C-terminal domain"/>
    <property type="match status" value="1"/>
</dbReference>
<dbReference type="SUPFAM" id="SSF51735">
    <property type="entry name" value="NAD(P)-binding Rossmann-fold domains"/>
    <property type="match status" value="1"/>
</dbReference>
<dbReference type="PROSITE" id="PS00071">
    <property type="entry name" value="GAPDH"/>
    <property type="match status" value="1"/>
</dbReference>
<reference key="1">
    <citation type="journal article" date="1989" name="Nature">
        <title>Molecular evidence for pre-Cretaceous angiosperm origins.</title>
        <authorList>
            <person name="Martin W."/>
            <person name="Gierl A."/>
            <person name="Saedler H."/>
        </authorList>
    </citation>
    <scope>NUCLEOTIDE SEQUENCE [MRNA]</scope>
</reference>
<accession>P26518</accession>
<comment type="function">
    <text evidence="1">Key enzyme in glycolysis that catalyzes the first step of the pathway by converting D-glyceraldehyde 3-phosphate (G3P) into 3-phospho-D-glyceroyl phosphate. Essential for the maintenance of cellular ATP levels and carbohydrate metabolism (By similarity).</text>
</comment>
<comment type="catalytic activity">
    <reaction evidence="2">
        <text>D-glyceraldehyde 3-phosphate + phosphate + NAD(+) = (2R)-3-phospho-glyceroyl phosphate + NADH + H(+)</text>
        <dbReference type="Rhea" id="RHEA:10300"/>
        <dbReference type="ChEBI" id="CHEBI:15378"/>
        <dbReference type="ChEBI" id="CHEBI:43474"/>
        <dbReference type="ChEBI" id="CHEBI:57540"/>
        <dbReference type="ChEBI" id="CHEBI:57604"/>
        <dbReference type="ChEBI" id="CHEBI:57945"/>
        <dbReference type="ChEBI" id="CHEBI:59776"/>
        <dbReference type="EC" id="1.2.1.12"/>
    </reaction>
</comment>
<comment type="pathway">
    <text>Carbohydrate degradation; glycolysis; pyruvate from D-glyceraldehyde 3-phosphate: step 1/5.</text>
</comment>
<comment type="subunit">
    <text evidence="1">Homotetramer.</text>
</comment>
<comment type="subcellular location">
    <subcellularLocation>
        <location evidence="1">Cytoplasm</location>
    </subcellularLocation>
</comment>
<comment type="miscellaneous">
    <text>Plants contain two types of GAPDH: cytosolic forms which participate in glycolysis and chloroplast forms which participate in photosynthesis. All the forms are encoded by distinct genes.</text>
</comment>
<comment type="similarity">
    <text evidence="3">Belongs to the glyceraldehyde-3-phosphate dehydrogenase family.</text>
</comment>
<name>G3PC_MAGLI</name>
<gene>
    <name type="primary">GAPC</name>
    <name type="synonym">GAPDH</name>
</gene>
<evidence type="ECO:0000250" key="1"/>
<evidence type="ECO:0000255" key="2">
    <source>
        <dbReference type="PROSITE-ProRule" id="PRU10009"/>
    </source>
</evidence>
<evidence type="ECO:0000305" key="3"/>
<proteinExistence type="evidence at transcript level"/>
<protein>
    <recommendedName>
        <fullName>Glyceraldehyde-3-phosphate dehydrogenase, cytosolic</fullName>
        <ecNumber>1.2.1.12</ecNumber>
    </recommendedName>
</protein>